<reference key="1">
    <citation type="journal article" date="2006" name="Nat. Biotechnol.">
        <title>Genome sequence of the ubiquitous hydrocarbon-degrading marine bacterium Alcanivorax borkumensis.</title>
        <authorList>
            <person name="Schneiker S."/>
            <person name="Martins dos Santos V.A.P."/>
            <person name="Bartels D."/>
            <person name="Bekel T."/>
            <person name="Brecht M."/>
            <person name="Buhrmester J."/>
            <person name="Chernikova T.N."/>
            <person name="Denaro R."/>
            <person name="Ferrer M."/>
            <person name="Gertler C."/>
            <person name="Goesmann A."/>
            <person name="Golyshina O.V."/>
            <person name="Kaminski F."/>
            <person name="Khachane A.N."/>
            <person name="Lang S."/>
            <person name="Linke B."/>
            <person name="McHardy A.C."/>
            <person name="Meyer F."/>
            <person name="Nechitaylo T."/>
            <person name="Puehler A."/>
            <person name="Regenhardt D."/>
            <person name="Rupp O."/>
            <person name="Sabirova J.S."/>
            <person name="Selbitschka W."/>
            <person name="Yakimov M.M."/>
            <person name="Timmis K.N."/>
            <person name="Vorhoelter F.-J."/>
            <person name="Weidner S."/>
            <person name="Kaiser O."/>
            <person name="Golyshin P.N."/>
        </authorList>
    </citation>
    <scope>NUCLEOTIDE SEQUENCE [LARGE SCALE GENOMIC DNA]</scope>
    <source>
        <strain>ATCC 700651 / DSM 11573 / NCIMB 13689 / SK2</strain>
    </source>
</reference>
<sequence>MNVDDFDFELPDRLIARHPPAQRRDARLLALTCDALEHQQFPDLLSHVHPGDLLIFNDTRVIPARLFGQKESGGKVEVLIERVVDDHEALAHVRASKSPKPGSWLEFAKGIRAQVTGRRGALFILHFSLPGNGCDTLLSALELIGHVPLPPYIDRPDEDGDMERYQTVYAREPGAVAAPTAGLHFDDAMLAALEQRGVDIGFVTLHVGAGTFQPVRVDKVEDHHMHSERYQIPGSLVEQVAQAHARGGRVVAVGTTALRALEAASQSGGLHAGQGETDIFIFPGYRFRLVDALVTNFHLPKSTLLMLISAFAGRDRIMGAYRAAIEAQYRFFSYGDAMFIEGTQPASRNTQHVKSGADE</sequence>
<organism>
    <name type="scientific">Alcanivorax borkumensis (strain ATCC 700651 / DSM 11573 / NCIMB 13689 / SK2)</name>
    <dbReference type="NCBI Taxonomy" id="393595"/>
    <lineage>
        <taxon>Bacteria</taxon>
        <taxon>Pseudomonadati</taxon>
        <taxon>Pseudomonadota</taxon>
        <taxon>Gammaproteobacteria</taxon>
        <taxon>Oceanospirillales</taxon>
        <taxon>Alcanivoracaceae</taxon>
        <taxon>Alcanivorax</taxon>
    </lineage>
</organism>
<protein>
    <recommendedName>
        <fullName evidence="1">S-adenosylmethionine:tRNA ribosyltransferase-isomerase</fullName>
        <ecNumber evidence="1">2.4.99.17</ecNumber>
    </recommendedName>
    <alternativeName>
        <fullName evidence="1">Queuosine biosynthesis protein QueA</fullName>
    </alternativeName>
</protein>
<keyword id="KW-0963">Cytoplasm</keyword>
<keyword id="KW-0671">Queuosine biosynthesis</keyword>
<keyword id="KW-1185">Reference proteome</keyword>
<keyword id="KW-0949">S-adenosyl-L-methionine</keyword>
<keyword id="KW-0808">Transferase</keyword>
<evidence type="ECO:0000255" key="1">
    <source>
        <dbReference type="HAMAP-Rule" id="MF_00113"/>
    </source>
</evidence>
<accession>Q0VSA0</accession>
<feature type="chain" id="PRO_1000015173" description="S-adenosylmethionine:tRNA ribosyltransferase-isomerase">
    <location>
        <begin position="1"/>
        <end position="359"/>
    </location>
</feature>
<comment type="function">
    <text evidence="1">Transfers and isomerizes the ribose moiety from AdoMet to the 7-aminomethyl group of 7-deazaguanine (preQ1-tRNA) to give epoxyqueuosine (oQ-tRNA).</text>
</comment>
<comment type="catalytic activity">
    <reaction evidence="1">
        <text>7-aminomethyl-7-carbaguanosine(34) in tRNA + S-adenosyl-L-methionine = epoxyqueuosine(34) in tRNA + adenine + L-methionine + 2 H(+)</text>
        <dbReference type="Rhea" id="RHEA:32155"/>
        <dbReference type="Rhea" id="RHEA-COMP:10342"/>
        <dbReference type="Rhea" id="RHEA-COMP:18582"/>
        <dbReference type="ChEBI" id="CHEBI:15378"/>
        <dbReference type="ChEBI" id="CHEBI:16708"/>
        <dbReference type="ChEBI" id="CHEBI:57844"/>
        <dbReference type="ChEBI" id="CHEBI:59789"/>
        <dbReference type="ChEBI" id="CHEBI:82833"/>
        <dbReference type="ChEBI" id="CHEBI:194443"/>
        <dbReference type="EC" id="2.4.99.17"/>
    </reaction>
</comment>
<comment type="pathway">
    <text evidence="1">tRNA modification; tRNA-queuosine biosynthesis.</text>
</comment>
<comment type="subunit">
    <text evidence="1">Monomer.</text>
</comment>
<comment type="subcellular location">
    <subcellularLocation>
        <location evidence="1">Cytoplasm</location>
    </subcellularLocation>
</comment>
<comment type="similarity">
    <text evidence="1">Belongs to the QueA family.</text>
</comment>
<proteinExistence type="inferred from homology"/>
<name>QUEA_ALCBS</name>
<dbReference type="EC" id="2.4.99.17" evidence="1"/>
<dbReference type="EMBL" id="AM286690">
    <property type="protein sequence ID" value="CAL15948.1"/>
    <property type="molecule type" value="Genomic_DNA"/>
</dbReference>
<dbReference type="RefSeq" id="WP_011587786.1">
    <property type="nucleotide sequence ID" value="NC_008260.1"/>
</dbReference>
<dbReference type="SMR" id="Q0VSA0"/>
<dbReference type="STRING" id="393595.ABO_0500"/>
<dbReference type="KEGG" id="abo:ABO_0500"/>
<dbReference type="eggNOG" id="COG0809">
    <property type="taxonomic scope" value="Bacteria"/>
</dbReference>
<dbReference type="HOGENOM" id="CLU_039110_1_0_6"/>
<dbReference type="OrthoDB" id="9805933at2"/>
<dbReference type="UniPathway" id="UPA00392"/>
<dbReference type="Proteomes" id="UP000008871">
    <property type="component" value="Chromosome"/>
</dbReference>
<dbReference type="GO" id="GO:0005737">
    <property type="term" value="C:cytoplasm"/>
    <property type="evidence" value="ECO:0007669"/>
    <property type="project" value="UniProtKB-SubCell"/>
</dbReference>
<dbReference type="GO" id="GO:0051075">
    <property type="term" value="F:S-adenosylmethionine:tRNA ribosyltransferase-isomerase activity"/>
    <property type="evidence" value="ECO:0007669"/>
    <property type="project" value="UniProtKB-EC"/>
</dbReference>
<dbReference type="GO" id="GO:0008616">
    <property type="term" value="P:queuosine biosynthetic process"/>
    <property type="evidence" value="ECO:0007669"/>
    <property type="project" value="UniProtKB-UniRule"/>
</dbReference>
<dbReference type="GO" id="GO:0002099">
    <property type="term" value="P:tRNA wobble guanine modification"/>
    <property type="evidence" value="ECO:0007669"/>
    <property type="project" value="TreeGrafter"/>
</dbReference>
<dbReference type="FunFam" id="3.40.1780.10:FF:000001">
    <property type="entry name" value="S-adenosylmethionine:tRNA ribosyltransferase-isomerase"/>
    <property type="match status" value="1"/>
</dbReference>
<dbReference type="Gene3D" id="2.40.10.240">
    <property type="entry name" value="QueA-like"/>
    <property type="match status" value="1"/>
</dbReference>
<dbReference type="Gene3D" id="3.40.1780.10">
    <property type="entry name" value="QueA-like"/>
    <property type="match status" value="1"/>
</dbReference>
<dbReference type="HAMAP" id="MF_00113">
    <property type="entry name" value="QueA"/>
    <property type="match status" value="1"/>
</dbReference>
<dbReference type="InterPro" id="IPR003699">
    <property type="entry name" value="QueA"/>
</dbReference>
<dbReference type="InterPro" id="IPR042118">
    <property type="entry name" value="QueA_dom1"/>
</dbReference>
<dbReference type="InterPro" id="IPR042119">
    <property type="entry name" value="QueA_dom2"/>
</dbReference>
<dbReference type="InterPro" id="IPR036100">
    <property type="entry name" value="QueA_sf"/>
</dbReference>
<dbReference type="NCBIfam" id="NF001140">
    <property type="entry name" value="PRK00147.1"/>
    <property type="match status" value="1"/>
</dbReference>
<dbReference type="NCBIfam" id="TIGR00113">
    <property type="entry name" value="queA"/>
    <property type="match status" value="1"/>
</dbReference>
<dbReference type="PANTHER" id="PTHR30307">
    <property type="entry name" value="S-ADENOSYLMETHIONINE:TRNA RIBOSYLTRANSFERASE-ISOMERASE"/>
    <property type="match status" value="1"/>
</dbReference>
<dbReference type="PANTHER" id="PTHR30307:SF0">
    <property type="entry name" value="S-ADENOSYLMETHIONINE:TRNA RIBOSYLTRANSFERASE-ISOMERASE"/>
    <property type="match status" value="1"/>
</dbReference>
<dbReference type="Pfam" id="PF02547">
    <property type="entry name" value="Queuosine_synth"/>
    <property type="match status" value="1"/>
</dbReference>
<dbReference type="SUPFAM" id="SSF111337">
    <property type="entry name" value="QueA-like"/>
    <property type="match status" value="1"/>
</dbReference>
<gene>
    <name evidence="1" type="primary">queA</name>
    <name type="ordered locus">ABO_0500</name>
</gene>